<feature type="chain" id="PRO_0000193439" description="Peptidyl-prolyl cis-trans isomerase NIMA-interacting 4">
    <location>
        <begin position="1"/>
        <end position="131"/>
    </location>
</feature>
<feature type="domain" description="PpiC" evidence="3">
    <location>
        <begin position="35"/>
        <end position="129"/>
    </location>
</feature>
<feature type="region of interest" description="Necessary for association with the pre-rRNP complexes" evidence="1">
    <location>
        <begin position="1"/>
        <end position="41"/>
    </location>
</feature>
<feature type="region of interest" description="Disordered" evidence="4">
    <location>
        <begin position="1"/>
        <end position="39"/>
    </location>
</feature>
<feature type="region of interest" description="Necessary for nuclear localization and DNA-binding" evidence="1">
    <location>
        <begin position="1"/>
        <end position="25"/>
    </location>
</feature>
<feature type="compositionally biased region" description="Gly residues" evidence="4">
    <location>
        <begin position="7"/>
        <end position="18"/>
    </location>
</feature>
<feature type="modified residue" description="Phosphoserine; by CK2" evidence="2">
    <location>
        <position position="19"/>
    </location>
</feature>
<proteinExistence type="evidence at protein level"/>
<name>PIN4_MOUSE</name>
<organism>
    <name type="scientific">Mus musculus</name>
    <name type="common">Mouse</name>
    <dbReference type="NCBI Taxonomy" id="10090"/>
    <lineage>
        <taxon>Eukaryota</taxon>
        <taxon>Metazoa</taxon>
        <taxon>Chordata</taxon>
        <taxon>Craniata</taxon>
        <taxon>Vertebrata</taxon>
        <taxon>Euteleostomi</taxon>
        <taxon>Mammalia</taxon>
        <taxon>Eutheria</taxon>
        <taxon>Euarchontoglires</taxon>
        <taxon>Glires</taxon>
        <taxon>Rodentia</taxon>
        <taxon>Myomorpha</taxon>
        <taxon>Muroidea</taxon>
        <taxon>Muridae</taxon>
        <taxon>Murinae</taxon>
        <taxon>Mus</taxon>
        <taxon>Mus</taxon>
    </lineage>
</organism>
<accession>Q9CWW6</accession>
<accession>Q0VE57</accession>
<keyword id="KW-0963">Cytoplasm</keyword>
<keyword id="KW-0206">Cytoskeleton</keyword>
<keyword id="KW-0238">DNA-binding</keyword>
<keyword id="KW-0413">Isomerase</keyword>
<keyword id="KW-0539">Nucleus</keyword>
<keyword id="KW-0597">Phosphoprotein</keyword>
<keyword id="KW-1185">Reference proteome</keyword>
<keyword id="KW-0697">Rotamase</keyword>
<dbReference type="EC" id="5.2.1.8"/>
<dbReference type="EMBL" id="AK010338">
    <property type="protein sequence ID" value="BAB26863.1"/>
    <property type="molecule type" value="mRNA"/>
</dbReference>
<dbReference type="EMBL" id="AL807784">
    <property type="status" value="NOT_ANNOTATED_CDS"/>
    <property type="molecule type" value="Genomic_DNA"/>
</dbReference>
<dbReference type="EMBL" id="CH466564">
    <property type="protein sequence ID" value="EDL14129.1"/>
    <property type="molecule type" value="Genomic_DNA"/>
</dbReference>
<dbReference type="EMBL" id="BC119355">
    <property type="protein sequence ID" value="AAI19356.1"/>
    <property type="molecule type" value="mRNA"/>
</dbReference>
<dbReference type="EMBL" id="BC119357">
    <property type="protein sequence ID" value="AAI19358.1"/>
    <property type="molecule type" value="mRNA"/>
</dbReference>
<dbReference type="CCDS" id="CCDS41082.1"/>
<dbReference type="RefSeq" id="NP_081457.1">
    <property type="nucleotide sequence ID" value="NM_027181.3"/>
</dbReference>
<dbReference type="RefSeq" id="XP_011249230.1">
    <property type="nucleotide sequence ID" value="XM_011250928.1"/>
</dbReference>
<dbReference type="BMRB" id="Q9CWW6"/>
<dbReference type="SMR" id="Q9CWW6"/>
<dbReference type="BioGRID" id="213631">
    <property type="interactions" value="2"/>
</dbReference>
<dbReference type="FunCoup" id="Q9CWW6">
    <property type="interactions" value="2345"/>
</dbReference>
<dbReference type="IntAct" id="Q9CWW6">
    <property type="interactions" value="1"/>
</dbReference>
<dbReference type="MINT" id="Q9CWW6"/>
<dbReference type="STRING" id="10090.ENSMUSP00000109257"/>
<dbReference type="GlyGen" id="Q9CWW6">
    <property type="glycosylation" value="1 site, 1 O-linked glycan (1 site)"/>
</dbReference>
<dbReference type="iPTMnet" id="Q9CWW6"/>
<dbReference type="PhosphoSitePlus" id="Q9CWW6"/>
<dbReference type="SwissPalm" id="Q9CWW6"/>
<dbReference type="PaxDb" id="10090-ENSMUSP00000109257"/>
<dbReference type="PeptideAtlas" id="Q9CWW6"/>
<dbReference type="ProteomicsDB" id="287732"/>
<dbReference type="Pumba" id="Q9CWW6"/>
<dbReference type="Antibodypedia" id="27865">
    <property type="antibodies" value="227 antibodies from 26 providers"/>
</dbReference>
<dbReference type="Ensembl" id="ENSMUST00000113627.4">
    <property type="protein sequence ID" value="ENSMUSP00000109257.4"/>
    <property type="gene ID" value="ENSMUSG00000079480.4"/>
</dbReference>
<dbReference type="GeneID" id="69713"/>
<dbReference type="KEGG" id="mmu:69713"/>
<dbReference type="UCSC" id="uc009tyj.1">
    <property type="organism name" value="mouse"/>
</dbReference>
<dbReference type="AGR" id="MGI:1916963"/>
<dbReference type="CTD" id="5303"/>
<dbReference type="MGI" id="MGI:1916963">
    <property type="gene designation" value="Pin4"/>
</dbReference>
<dbReference type="VEuPathDB" id="HostDB:ENSMUSG00000079480"/>
<dbReference type="eggNOG" id="KOG3258">
    <property type="taxonomic scope" value="Eukaryota"/>
</dbReference>
<dbReference type="GeneTree" id="ENSGT00510000047029"/>
<dbReference type="HOGENOM" id="CLU_090028_2_1_1"/>
<dbReference type="InParanoid" id="Q9CWW6"/>
<dbReference type="OMA" id="NAINVRH"/>
<dbReference type="OrthoDB" id="1911748at2759"/>
<dbReference type="PhylomeDB" id="Q9CWW6"/>
<dbReference type="TreeFam" id="TF101102"/>
<dbReference type="BioGRID-ORCS" id="69713">
    <property type="hits" value="3 hits in 57 CRISPR screens"/>
</dbReference>
<dbReference type="ChiTaRS" id="Pin4">
    <property type="organism name" value="mouse"/>
</dbReference>
<dbReference type="PRO" id="PR:Q9CWW6"/>
<dbReference type="Proteomes" id="UP000000589">
    <property type="component" value="Chromosome X"/>
</dbReference>
<dbReference type="RNAct" id="Q9CWW6">
    <property type="molecule type" value="protein"/>
</dbReference>
<dbReference type="Bgee" id="ENSMUSG00000079480">
    <property type="expression patterns" value="Expressed in embryonic brain and 64 other cell types or tissues"/>
</dbReference>
<dbReference type="GO" id="GO:0005694">
    <property type="term" value="C:chromosome"/>
    <property type="evidence" value="ECO:0007669"/>
    <property type="project" value="Ensembl"/>
</dbReference>
<dbReference type="GO" id="GO:0005737">
    <property type="term" value="C:cytoplasm"/>
    <property type="evidence" value="ECO:0007669"/>
    <property type="project" value="UniProtKB-SubCell"/>
</dbReference>
<dbReference type="GO" id="GO:0005730">
    <property type="term" value="C:nucleolus"/>
    <property type="evidence" value="ECO:0007669"/>
    <property type="project" value="UniProtKB-SubCell"/>
</dbReference>
<dbReference type="GO" id="GO:0005654">
    <property type="term" value="C:nucleoplasm"/>
    <property type="evidence" value="ECO:0007669"/>
    <property type="project" value="Ensembl"/>
</dbReference>
<dbReference type="GO" id="GO:0005819">
    <property type="term" value="C:spindle"/>
    <property type="evidence" value="ECO:0007669"/>
    <property type="project" value="UniProtKB-SubCell"/>
</dbReference>
<dbReference type="GO" id="GO:0003677">
    <property type="term" value="F:DNA binding"/>
    <property type="evidence" value="ECO:0007669"/>
    <property type="project" value="UniProtKB-KW"/>
</dbReference>
<dbReference type="GO" id="GO:0003755">
    <property type="term" value="F:peptidyl-prolyl cis-trans isomerase activity"/>
    <property type="evidence" value="ECO:0007669"/>
    <property type="project" value="UniProtKB-KW"/>
</dbReference>
<dbReference type="GO" id="GO:0006364">
    <property type="term" value="P:rRNA processing"/>
    <property type="evidence" value="ECO:0007669"/>
    <property type="project" value="InterPro"/>
</dbReference>
<dbReference type="FunFam" id="3.10.50.40:FF:000015">
    <property type="entry name" value="Peptidyl-prolyl cis-trans isomerase"/>
    <property type="match status" value="1"/>
</dbReference>
<dbReference type="Gene3D" id="3.10.50.40">
    <property type="match status" value="1"/>
</dbReference>
<dbReference type="InterPro" id="IPR043323">
    <property type="entry name" value="PIN4"/>
</dbReference>
<dbReference type="InterPro" id="IPR046357">
    <property type="entry name" value="PPIase_dom_sf"/>
</dbReference>
<dbReference type="InterPro" id="IPR000297">
    <property type="entry name" value="PPIase_PpiC"/>
</dbReference>
<dbReference type="PANTHER" id="PTHR45995">
    <property type="match status" value="1"/>
</dbReference>
<dbReference type="Pfam" id="PF13616">
    <property type="entry name" value="Rotamase_3"/>
    <property type="match status" value="1"/>
</dbReference>
<dbReference type="SUPFAM" id="SSF54534">
    <property type="entry name" value="FKBP-like"/>
    <property type="match status" value="1"/>
</dbReference>
<dbReference type="PROSITE" id="PS50198">
    <property type="entry name" value="PPIC_PPIASE_2"/>
    <property type="match status" value="1"/>
</dbReference>
<sequence length="131" mass="13815">MPPKGKSGSGKGGKGGAASGSDSADKKSQGPKGGGNAVKVRHILCEKHGKIMEAMEKLKSGMRFSEVATQYSEDKARQGGDLGWMTRGSMVGPFQEAAFALPVSGMDKPVFTDPPVKTKFGYHIIMVEGRK</sequence>
<evidence type="ECO:0000250" key="1"/>
<evidence type="ECO:0000250" key="2">
    <source>
        <dbReference type="UniProtKB" id="Q9Y237"/>
    </source>
</evidence>
<evidence type="ECO:0000255" key="3">
    <source>
        <dbReference type="PROSITE-ProRule" id="PRU00278"/>
    </source>
</evidence>
<evidence type="ECO:0000256" key="4">
    <source>
        <dbReference type="SAM" id="MobiDB-lite"/>
    </source>
</evidence>
<evidence type="ECO:0000269" key="5">
    <source>
    </source>
</evidence>
<evidence type="ECO:0000305" key="6"/>
<reference key="1">
    <citation type="journal article" date="2005" name="Science">
        <title>The transcriptional landscape of the mammalian genome.</title>
        <authorList>
            <person name="Carninci P."/>
            <person name="Kasukawa T."/>
            <person name="Katayama S."/>
            <person name="Gough J."/>
            <person name="Frith M.C."/>
            <person name="Maeda N."/>
            <person name="Oyama R."/>
            <person name="Ravasi T."/>
            <person name="Lenhard B."/>
            <person name="Wells C."/>
            <person name="Kodzius R."/>
            <person name="Shimokawa K."/>
            <person name="Bajic V.B."/>
            <person name="Brenner S.E."/>
            <person name="Batalov S."/>
            <person name="Forrest A.R."/>
            <person name="Zavolan M."/>
            <person name="Davis M.J."/>
            <person name="Wilming L.G."/>
            <person name="Aidinis V."/>
            <person name="Allen J.E."/>
            <person name="Ambesi-Impiombato A."/>
            <person name="Apweiler R."/>
            <person name="Aturaliya R.N."/>
            <person name="Bailey T.L."/>
            <person name="Bansal M."/>
            <person name="Baxter L."/>
            <person name="Beisel K.W."/>
            <person name="Bersano T."/>
            <person name="Bono H."/>
            <person name="Chalk A.M."/>
            <person name="Chiu K.P."/>
            <person name="Choudhary V."/>
            <person name="Christoffels A."/>
            <person name="Clutterbuck D.R."/>
            <person name="Crowe M.L."/>
            <person name="Dalla E."/>
            <person name="Dalrymple B.P."/>
            <person name="de Bono B."/>
            <person name="Della Gatta G."/>
            <person name="di Bernardo D."/>
            <person name="Down T."/>
            <person name="Engstrom P."/>
            <person name="Fagiolini M."/>
            <person name="Faulkner G."/>
            <person name="Fletcher C.F."/>
            <person name="Fukushima T."/>
            <person name="Furuno M."/>
            <person name="Futaki S."/>
            <person name="Gariboldi M."/>
            <person name="Georgii-Hemming P."/>
            <person name="Gingeras T.R."/>
            <person name="Gojobori T."/>
            <person name="Green R.E."/>
            <person name="Gustincich S."/>
            <person name="Harbers M."/>
            <person name="Hayashi Y."/>
            <person name="Hensch T.K."/>
            <person name="Hirokawa N."/>
            <person name="Hill D."/>
            <person name="Huminiecki L."/>
            <person name="Iacono M."/>
            <person name="Ikeo K."/>
            <person name="Iwama A."/>
            <person name="Ishikawa T."/>
            <person name="Jakt M."/>
            <person name="Kanapin A."/>
            <person name="Katoh M."/>
            <person name="Kawasawa Y."/>
            <person name="Kelso J."/>
            <person name="Kitamura H."/>
            <person name="Kitano H."/>
            <person name="Kollias G."/>
            <person name="Krishnan S.P."/>
            <person name="Kruger A."/>
            <person name="Kummerfeld S.K."/>
            <person name="Kurochkin I.V."/>
            <person name="Lareau L.F."/>
            <person name="Lazarevic D."/>
            <person name="Lipovich L."/>
            <person name="Liu J."/>
            <person name="Liuni S."/>
            <person name="McWilliam S."/>
            <person name="Madan Babu M."/>
            <person name="Madera M."/>
            <person name="Marchionni L."/>
            <person name="Matsuda H."/>
            <person name="Matsuzawa S."/>
            <person name="Miki H."/>
            <person name="Mignone F."/>
            <person name="Miyake S."/>
            <person name="Morris K."/>
            <person name="Mottagui-Tabar S."/>
            <person name="Mulder N."/>
            <person name="Nakano N."/>
            <person name="Nakauchi H."/>
            <person name="Ng P."/>
            <person name="Nilsson R."/>
            <person name="Nishiguchi S."/>
            <person name="Nishikawa S."/>
            <person name="Nori F."/>
            <person name="Ohara O."/>
            <person name="Okazaki Y."/>
            <person name="Orlando V."/>
            <person name="Pang K.C."/>
            <person name="Pavan W.J."/>
            <person name="Pavesi G."/>
            <person name="Pesole G."/>
            <person name="Petrovsky N."/>
            <person name="Piazza S."/>
            <person name="Reed J."/>
            <person name="Reid J.F."/>
            <person name="Ring B.Z."/>
            <person name="Ringwald M."/>
            <person name="Rost B."/>
            <person name="Ruan Y."/>
            <person name="Salzberg S.L."/>
            <person name="Sandelin A."/>
            <person name="Schneider C."/>
            <person name="Schoenbach C."/>
            <person name="Sekiguchi K."/>
            <person name="Semple C.A."/>
            <person name="Seno S."/>
            <person name="Sessa L."/>
            <person name="Sheng Y."/>
            <person name="Shibata Y."/>
            <person name="Shimada H."/>
            <person name="Shimada K."/>
            <person name="Silva D."/>
            <person name="Sinclair B."/>
            <person name="Sperling S."/>
            <person name="Stupka E."/>
            <person name="Sugiura K."/>
            <person name="Sultana R."/>
            <person name="Takenaka Y."/>
            <person name="Taki K."/>
            <person name="Tammoja K."/>
            <person name="Tan S.L."/>
            <person name="Tang S."/>
            <person name="Taylor M.S."/>
            <person name="Tegner J."/>
            <person name="Teichmann S.A."/>
            <person name="Ueda H.R."/>
            <person name="van Nimwegen E."/>
            <person name="Verardo R."/>
            <person name="Wei C.L."/>
            <person name="Yagi K."/>
            <person name="Yamanishi H."/>
            <person name="Zabarovsky E."/>
            <person name="Zhu S."/>
            <person name="Zimmer A."/>
            <person name="Hide W."/>
            <person name="Bult C."/>
            <person name="Grimmond S.M."/>
            <person name="Teasdale R.D."/>
            <person name="Liu E.T."/>
            <person name="Brusic V."/>
            <person name="Quackenbush J."/>
            <person name="Wahlestedt C."/>
            <person name="Mattick J.S."/>
            <person name="Hume D.A."/>
            <person name="Kai C."/>
            <person name="Sasaki D."/>
            <person name="Tomaru Y."/>
            <person name="Fukuda S."/>
            <person name="Kanamori-Katayama M."/>
            <person name="Suzuki M."/>
            <person name="Aoki J."/>
            <person name="Arakawa T."/>
            <person name="Iida J."/>
            <person name="Imamura K."/>
            <person name="Itoh M."/>
            <person name="Kato T."/>
            <person name="Kawaji H."/>
            <person name="Kawagashira N."/>
            <person name="Kawashima T."/>
            <person name="Kojima M."/>
            <person name="Kondo S."/>
            <person name="Konno H."/>
            <person name="Nakano K."/>
            <person name="Ninomiya N."/>
            <person name="Nishio T."/>
            <person name="Okada M."/>
            <person name="Plessy C."/>
            <person name="Shibata K."/>
            <person name="Shiraki T."/>
            <person name="Suzuki S."/>
            <person name="Tagami M."/>
            <person name="Waki K."/>
            <person name="Watahiki A."/>
            <person name="Okamura-Oho Y."/>
            <person name="Suzuki H."/>
            <person name="Kawai J."/>
            <person name="Hayashizaki Y."/>
        </authorList>
    </citation>
    <scope>NUCLEOTIDE SEQUENCE [LARGE SCALE MRNA]</scope>
    <source>
        <strain>C57BL/6J</strain>
        <tissue>Embryonic stem cell</tissue>
    </source>
</reference>
<reference key="2">
    <citation type="journal article" date="2009" name="PLoS Biol.">
        <title>Lineage-specific biology revealed by a finished genome assembly of the mouse.</title>
        <authorList>
            <person name="Church D.M."/>
            <person name="Goodstadt L."/>
            <person name="Hillier L.W."/>
            <person name="Zody M.C."/>
            <person name="Goldstein S."/>
            <person name="She X."/>
            <person name="Bult C.J."/>
            <person name="Agarwala R."/>
            <person name="Cherry J.L."/>
            <person name="DiCuccio M."/>
            <person name="Hlavina W."/>
            <person name="Kapustin Y."/>
            <person name="Meric P."/>
            <person name="Maglott D."/>
            <person name="Birtle Z."/>
            <person name="Marques A.C."/>
            <person name="Graves T."/>
            <person name="Zhou S."/>
            <person name="Teague B."/>
            <person name="Potamousis K."/>
            <person name="Churas C."/>
            <person name="Place M."/>
            <person name="Herschleb J."/>
            <person name="Runnheim R."/>
            <person name="Forrest D."/>
            <person name="Amos-Landgraf J."/>
            <person name="Schwartz D.C."/>
            <person name="Cheng Z."/>
            <person name="Lindblad-Toh K."/>
            <person name="Eichler E.E."/>
            <person name="Ponting C.P."/>
        </authorList>
    </citation>
    <scope>NUCLEOTIDE SEQUENCE [LARGE SCALE GENOMIC DNA]</scope>
    <source>
        <strain>C57BL/6J</strain>
    </source>
</reference>
<reference key="3">
    <citation type="submission" date="2005-09" db="EMBL/GenBank/DDBJ databases">
        <authorList>
            <person name="Mural R.J."/>
            <person name="Adams M.D."/>
            <person name="Myers E.W."/>
            <person name="Smith H.O."/>
            <person name="Venter J.C."/>
        </authorList>
    </citation>
    <scope>NUCLEOTIDE SEQUENCE [LARGE SCALE GENOMIC DNA]</scope>
</reference>
<reference key="4">
    <citation type="journal article" date="2004" name="Genome Res.">
        <title>The status, quality, and expansion of the NIH full-length cDNA project: the Mammalian Gene Collection (MGC).</title>
        <authorList>
            <consortium name="The MGC Project Team"/>
        </authorList>
    </citation>
    <scope>NUCLEOTIDE SEQUENCE [LARGE SCALE MRNA]</scope>
    <source>
        <tissue>Brain</tissue>
    </source>
</reference>
<reference key="5">
    <citation type="journal article" date="2002" name="J. Biol. Chem.">
        <title>Isolation and proteomic characterization of human Parvulin-associating pre-ribosomal ribonucleoprotein complexes.</title>
        <authorList>
            <person name="Fujiyama S."/>
            <person name="Yanagida M."/>
            <person name="Hayano T."/>
            <person name="Miura Y."/>
            <person name="Isobe T."/>
            <person name="Fujimori F."/>
            <person name="Uchida T."/>
            <person name="Takahashi N."/>
        </authorList>
    </citation>
    <scope>IDENTIFICATION IN PRE-RRNP COMPLEXES</scope>
</reference>
<reference key="6">
    <citation type="journal article" date="2010" name="Cell">
        <title>A tissue-specific atlas of mouse protein phosphorylation and expression.</title>
        <authorList>
            <person name="Huttlin E.L."/>
            <person name="Jedrychowski M.P."/>
            <person name="Elias J.E."/>
            <person name="Goswami T."/>
            <person name="Rad R."/>
            <person name="Beausoleil S.A."/>
            <person name="Villen J."/>
            <person name="Haas W."/>
            <person name="Sowa M.E."/>
            <person name="Gygi S.P."/>
        </authorList>
    </citation>
    <scope>IDENTIFICATION BY MASS SPECTROMETRY [LARGE SCALE ANALYSIS]</scope>
    <source>
        <tissue>Brain</tissue>
        <tissue>Heart</tissue>
        <tissue>Kidney</tissue>
        <tissue>Liver</tissue>
        <tissue>Lung</tissue>
        <tissue>Pancreas</tissue>
        <tissue>Spleen</tissue>
        <tissue>Testis</tissue>
    </source>
</reference>
<comment type="function">
    <text evidence="1">Involved as a ribosomal RNA processing factor in ribosome biogenesis. Binds to tightly bent AT-rich stretches of double-stranded DNA (By similarity).</text>
</comment>
<comment type="catalytic activity">
    <reaction>
        <text>[protein]-peptidylproline (omega=180) = [protein]-peptidylproline (omega=0)</text>
        <dbReference type="Rhea" id="RHEA:16237"/>
        <dbReference type="Rhea" id="RHEA-COMP:10747"/>
        <dbReference type="Rhea" id="RHEA-COMP:10748"/>
        <dbReference type="ChEBI" id="CHEBI:83833"/>
        <dbReference type="ChEBI" id="CHEBI:83834"/>
        <dbReference type="EC" id="5.2.1.8"/>
    </reaction>
</comment>
<comment type="subunit">
    <text evidence="5">Found in pre-ribosomal ribonucleoprotein (pre-rRNP) complexes.</text>
</comment>
<comment type="subcellular location">
    <subcellularLocation>
        <location evidence="1">Nucleus</location>
        <location evidence="1">Nucleolus</location>
    </subcellularLocation>
    <subcellularLocation>
        <location evidence="1">Cytoplasm</location>
        <location evidence="1">Cytoskeleton</location>
        <location evidence="1">Spindle</location>
    </subcellularLocation>
    <subcellularLocation>
        <location evidence="1">Cytoplasm</location>
    </subcellularLocation>
    <text evidence="1">Colocalizes in the nucleolus during interphase and on the spindle apparatus during mitosis with NPM1.</text>
</comment>
<comment type="PTM">
    <text evidence="1">Phosphorylated. Phosphorylation occurs both in the nucleus and the cytoplasm. Phosphorylation at Ser-19 does not affect its PPIase activity but is required for nuclear localization, and the dephosphorylation is a prerequisite for the binding to DNA. The unphosphorylated form associates with the pre-rRNP complexes in the nucleus (By similarity).</text>
</comment>
<comment type="similarity">
    <text evidence="6">Belongs to the PpiC/parvulin rotamase family. PIN4 subfamily.</text>
</comment>
<gene>
    <name type="primary">Pin4</name>
</gene>
<protein>
    <recommendedName>
        <fullName>Peptidyl-prolyl cis-trans isomerase NIMA-interacting 4</fullName>
        <ecNumber>5.2.1.8</ecNumber>
    </recommendedName>
    <alternativeName>
        <fullName>Parvulin-14</fullName>
        <shortName>Par14</shortName>
    </alternativeName>
    <alternativeName>
        <fullName>Peptidyl-prolyl cis-trans isomerase Pin4</fullName>
        <shortName>PPIase Pin4</shortName>
    </alternativeName>
    <alternativeName>
        <fullName>Rotamase Pin4</fullName>
    </alternativeName>
</protein>